<sequence>MKRDIISVYDMKDDLEDIIELSIKLKKDRTIKFSEKKILAMIFEKPSTRTRNSLEVAMEQLNGHAIYLNPNDMQIGRGETIADTARVLSRFVDIISYRAFNHDDVVELARHATVPVLNALDNLEHPMQIVADFMTVYEKKHRLKGLKLAYIGDGNNMANSLLLGSSILGVDISIACPKGFEPNKEILRQAREISLKTGNKIEITDDPRIAVEASDIIYTDVWVSMGEENERENKERIFMPYQVNEDLTENANRDYIFMHCLPAHRGLEVTAGVIDGIHSVVFDEAENRIYSEKGIIYKLLS</sequence>
<feature type="chain" id="PRO_0000113070" description="Ornithine carbamoyltransferase">
    <location>
        <begin position="1"/>
        <end position="301"/>
    </location>
</feature>
<feature type="binding site" evidence="2">
    <location>
        <begin position="47"/>
        <end position="50"/>
    </location>
    <ligand>
        <name>carbamoyl phosphate</name>
        <dbReference type="ChEBI" id="CHEBI:58228"/>
    </ligand>
</feature>
<feature type="binding site" evidence="2">
    <location>
        <position position="74"/>
    </location>
    <ligand>
        <name>carbamoyl phosphate</name>
        <dbReference type="ChEBI" id="CHEBI:58228"/>
    </ligand>
</feature>
<feature type="binding site" evidence="2">
    <location>
        <position position="98"/>
    </location>
    <ligand>
        <name>carbamoyl phosphate</name>
        <dbReference type="ChEBI" id="CHEBI:58228"/>
    </ligand>
</feature>
<feature type="binding site" evidence="2">
    <location>
        <begin position="125"/>
        <end position="128"/>
    </location>
    <ligand>
        <name>carbamoyl phosphate</name>
        <dbReference type="ChEBI" id="CHEBI:58228"/>
    </ligand>
</feature>
<feature type="binding site" evidence="2">
    <location>
        <position position="156"/>
    </location>
    <ligand>
        <name>L-ornithine</name>
        <dbReference type="ChEBI" id="CHEBI:46911"/>
    </ligand>
</feature>
<feature type="binding site" evidence="2">
    <location>
        <position position="220"/>
    </location>
    <ligand>
        <name>L-ornithine</name>
        <dbReference type="ChEBI" id="CHEBI:46911"/>
    </ligand>
</feature>
<feature type="binding site" evidence="2">
    <location>
        <begin position="224"/>
        <end position="225"/>
    </location>
    <ligand>
        <name>L-ornithine</name>
        <dbReference type="ChEBI" id="CHEBI:46911"/>
    </ligand>
</feature>
<feature type="binding site" evidence="2">
    <location>
        <begin position="260"/>
        <end position="261"/>
    </location>
    <ligand>
        <name>carbamoyl phosphate</name>
        <dbReference type="ChEBI" id="CHEBI:58228"/>
    </ligand>
</feature>
<feature type="binding site" evidence="2">
    <location>
        <position position="288"/>
    </location>
    <ligand>
        <name>carbamoyl phosphate</name>
        <dbReference type="ChEBI" id="CHEBI:58228"/>
    </ligand>
</feature>
<name>OTC_PICTO</name>
<keyword id="KW-0028">Amino-acid biosynthesis</keyword>
<keyword id="KW-0055">Arginine biosynthesis</keyword>
<keyword id="KW-0963">Cytoplasm</keyword>
<keyword id="KW-0808">Transferase</keyword>
<protein>
    <recommendedName>
        <fullName evidence="2">Ornithine carbamoyltransferase</fullName>
        <shortName evidence="2">OTCase</shortName>
        <ecNumber evidence="2">2.1.3.3</ecNumber>
    </recommendedName>
</protein>
<gene>
    <name evidence="2" type="primary">argF</name>
    <name type="ordered locus">PTO0732</name>
</gene>
<reference key="1">
    <citation type="journal article" date="2004" name="Proc. Natl. Acad. Sci. U.S.A.">
        <title>Genome sequence of Picrophilus torridus and its implications for life around pH 0.</title>
        <authorList>
            <person name="Fuetterer O."/>
            <person name="Angelov A."/>
            <person name="Liesegang H."/>
            <person name="Gottschalk G."/>
            <person name="Schleper C."/>
            <person name="Schepers B."/>
            <person name="Dock C."/>
            <person name="Antranikian G."/>
            <person name="Liebl W."/>
        </authorList>
    </citation>
    <scope>NUCLEOTIDE SEQUENCE [LARGE SCALE GENOMIC DNA]</scope>
    <source>
        <strain>ATCC 700027 / DSM 9790 / JCM 10055 / NBRC 100828 / KAW 2/3</strain>
    </source>
</reference>
<organism>
    <name type="scientific">Picrophilus torridus (strain ATCC 700027 / DSM 9790 / JCM 10055 / NBRC 100828 / KAW 2/3)</name>
    <dbReference type="NCBI Taxonomy" id="1122961"/>
    <lineage>
        <taxon>Archaea</taxon>
        <taxon>Methanobacteriati</taxon>
        <taxon>Thermoplasmatota</taxon>
        <taxon>Thermoplasmata</taxon>
        <taxon>Thermoplasmatales</taxon>
        <taxon>Picrophilaceae</taxon>
        <taxon>Picrophilus</taxon>
    </lineage>
</organism>
<comment type="function">
    <text evidence="1">Reversibly catalyzes the transfer of the carbamoyl group from carbamoyl phosphate (CP) to the N(epsilon) atom of ornithine (ORN) to produce L-citrulline.</text>
</comment>
<comment type="catalytic activity">
    <reaction evidence="2">
        <text>carbamoyl phosphate + L-ornithine = L-citrulline + phosphate + H(+)</text>
        <dbReference type="Rhea" id="RHEA:19513"/>
        <dbReference type="ChEBI" id="CHEBI:15378"/>
        <dbReference type="ChEBI" id="CHEBI:43474"/>
        <dbReference type="ChEBI" id="CHEBI:46911"/>
        <dbReference type="ChEBI" id="CHEBI:57743"/>
        <dbReference type="ChEBI" id="CHEBI:58228"/>
        <dbReference type="EC" id="2.1.3.3"/>
    </reaction>
</comment>
<comment type="pathway">
    <text evidence="2">Amino-acid biosynthesis; L-arginine biosynthesis; L-arginine from L-ornithine and carbamoyl phosphate: step 1/3.</text>
</comment>
<comment type="subcellular location">
    <subcellularLocation>
        <location evidence="2">Cytoplasm</location>
    </subcellularLocation>
</comment>
<comment type="similarity">
    <text evidence="2">Belongs to the aspartate/ornithine carbamoyltransferase superfamily. OTCase family.</text>
</comment>
<dbReference type="EC" id="2.1.3.3" evidence="2"/>
<dbReference type="EMBL" id="AE017261">
    <property type="protein sequence ID" value="AAT43317.1"/>
    <property type="molecule type" value="Genomic_DNA"/>
</dbReference>
<dbReference type="RefSeq" id="WP_011177533.1">
    <property type="nucleotide sequence ID" value="NC_005877.1"/>
</dbReference>
<dbReference type="SMR" id="Q6L135"/>
<dbReference type="FunCoup" id="Q6L135">
    <property type="interactions" value="191"/>
</dbReference>
<dbReference type="STRING" id="263820.PTO0732"/>
<dbReference type="PaxDb" id="263820-PTO0732"/>
<dbReference type="GeneID" id="2845179"/>
<dbReference type="KEGG" id="pto:PTO0732"/>
<dbReference type="PATRIC" id="fig|263820.9.peg.767"/>
<dbReference type="eggNOG" id="arCOG00912">
    <property type="taxonomic scope" value="Archaea"/>
</dbReference>
<dbReference type="HOGENOM" id="CLU_043846_3_2_2"/>
<dbReference type="InParanoid" id="Q6L135"/>
<dbReference type="OrthoDB" id="4696at2157"/>
<dbReference type="UniPathway" id="UPA00068">
    <property type="reaction ID" value="UER00112"/>
</dbReference>
<dbReference type="Proteomes" id="UP000000438">
    <property type="component" value="Chromosome"/>
</dbReference>
<dbReference type="GO" id="GO:0005737">
    <property type="term" value="C:cytoplasm"/>
    <property type="evidence" value="ECO:0007669"/>
    <property type="project" value="UniProtKB-SubCell"/>
</dbReference>
<dbReference type="GO" id="GO:0016597">
    <property type="term" value="F:amino acid binding"/>
    <property type="evidence" value="ECO:0007669"/>
    <property type="project" value="InterPro"/>
</dbReference>
<dbReference type="GO" id="GO:0004585">
    <property type="term" value="F:ornithine carbamoyltransferase activity"/>
    <property type="evidence" value="ECO:0007669"/>
    <property type="project" value="UniProtKB-UniRule"/>
</dbReference>
<dbReference type="GO" id="GO:0042450">
    <property type="term" value="P:arginine biosynthetic process via ornithine"/>
    <property type="evidence" value="ECO:0007669"/>
    <property type="project" value="TreeGrafter"/>
</dbReference>
<dbReference type="GO" id="GO:0019240">
    <property type="term" value="P:citrulline biosynthetic process"/>
    <property type="evidence" value="ECO:0007669"/>
    <property type="project" value="TreeGrafter"/>
</dbReference>
<dbReference type="GO" id="GO:0006526">
    <property type="term" value="P:L-arginine biosynthetic process"/>
    <property type="evidence" value="ECO:0007669"/>
    <property type="project" value="UniProtKB-UniRule"/>
</dbReference>
<dbReference type="FunFam" id="3.40.50.1370:FF:000008">
    <property type="entry name" value="Ornithine carbamoyltransferase"/>
    <property type="match status" value="1"/>
</dbReference>
<dbReference type="Gene3D" id="3.40.50.1370">
    <property type="entry name" value="Aspartate/ornithine carbamoyltransferase"/>
    <property type="match status" value="2"/>
</dbReference>
<dbReference type="HAMAP" id="MF_01109">
    <property type="entry name" value="OTCase"/>
    <property type="match status" value="1"/>
</dbReference>
<dbReference type="InterPro" id="IPR006132">
    <property type="entry name" value="Asp/Orn_carbamoyltranf_P-bd"/>
</dbReference>
<dbReference type="InterPro" id="IPR006130">
    <property type="entry name" value="Asp/Orn_carbamoylTrfase"/>
</dbReference>
<dbReference type="InterPro" id="IPR036901">
    <property type="entry name" value="Asp/Orn_carbamoylTrfase_sf"/>
</dbReference>
<dbReference type="InterPro" id="IPR006131">
    <property type="entry name" value="Asp_carbamoyltransf_Asp/Orn-bd"/>
</dbReference>
<dbReference type="InterPro" id="IPR002292">
    <property type="entry name" value="Orn/put_carbamltrans"/>
</dbReference>
<dbReference type="InterPro" id="IPR024904">
    <property type="entry name" value="OTCase_ArgI"/>
</dbReference>
<dbReference type="NCBIfam" id="TIGR00658">
    <property type="entry name" value="orni_carb_tr"/>
    <property type="match status" value="1"/>
</dbReference>
<dbReference type="NCBIfam" id="NF001986">
    <property type="entry name" value="PRK00779.1"/>
    <property type="match status" value="1"/>
</dbReference>
<dbReference type="PANTHER" id="PTHR45753">
    <property type="entry name" value="ORNITHINE CARBAMOYLTRANSFERASE, MITOCHONDRIAL"/>
    <property type="match status" value="1"/>
</dbReference>
<dbReference type="PANTHER" id="PTHR45753:SF3">
    <property type="entry name" value="ORNITHINE TRANSCARBAMYLASE, MITOCHONDRIAL"/>
    <property type="match status" value="1"/>
</dbReference>
<dbReference type="Pfam" id="PF00185">
    <property type="entry name" value="OTCace"/>
    <property type="match status" value="1"/>
</dbReference>
<dbReference type="Pfam" id="PF02729">
    <property type="entry name" value="OTCace_N"/>
    <property type="match status" value="1"/>
</dbReference>
<dbReference type="PRINTS" id="PR00100">
    <property type="entry name" value="AOTCASE"/>
</dbReference>
<dbReference type="PRINTS" id="PR00102">
    <property type="entry name" value="OTCASE"/>
</dbReference>
<dbReference type="SUPFAM" id="SSF53671">
    <property type="entry name" value="Aspartate/ornithine carbamoyltransferase"/>
    <property type="match status" value="1"/>
</dbReference>
<dbReference type="PROSITE" id="PS00097">
    <property type="entry name" value="CARBAMOYLTRANSFERASE"/>
    <property type="match status" value="1"/>
</dbReference>
<evidence type="ECO:0000250" key="1"/>
<evidence type="ECO:0000255" key="2">
    <source>
        <dbReference type="HAMAP-Rule" id="MF_01109"/>
    </source>
</evidence>
<proteinExistence type="inferred from homology"/>
<accession>Q6L135</accession>